<name>RS19_CORJK</name>
<sequence>MPRSLKKGPFVDEHLLAKVDAQNEKGNKNVIKTWSRRSTILPDFIGHTFAVHDGRKHVPVFIDDSMVGHKLGEFAPTKTFKGHVKDDKKGRR</sequence>
<comment type="function">
    <text evidence="1">Protein S19 forms a complex with S13 that binds strongly to the 16S ribosomal RNA.</text>
</comment>
<comment type="similarity">
    <text evidence="1">Belongs to the universal ribosomal protein uS19 family.</text>
</comment>
<organism>
    <name type="scientific">Corynebacterium jeikeium (strain K411)</name>
    <dbReference type="NCBI Taxonomy" id="306537"/>
    <lineage>
        <taxon>Bacteria</taxon>
        <taxon>Bacillati</taxon>
        <taxon>Actinomycetota</taxon>
        <taxon>Actinomycetes</taxon>
        <taxon>Mycobacteriales</taxon>
        <taxon>Corynebacteriaceae</taxon>
        <taxon>Corynebacterium</taxon>
    </lineage>
</organism>
<reference key="1">
    <citation type="journal article" date="2005" name="J. Bacteriol.">
        <title>Complete genome sequence and analysis of the multiresistant nosocomial pathogen Corynebacterium jeikeium K411, a lipid-requiring bacterium of the human skin flora.</title>
        <authorList>
            <person name="Tauch A."/>
            <person name="Kaiser O."/>
            <person name="Hain T."/>
            <person name="Goesmann A."/>
            <person name="Weisshaar B."/>
            <person name="Albersmeier A."/>
            <person name="Bekel T."/>
            <person name="Bischoff N."/>
            <person name="Brune I."/>
            <person name="Chakraborty T."/>
            <person name="Kalinowski J."/>
            <person name="Meyer F."/>
            <person name="Rupp O."/>
            <person name="Schneiker S."/>
            <person name="Viehoever P."/>
            <person name="Puehler A."/>
        </authorList>
    </citation>
    <scope>NUCLEOTIDE SEQUENCE [LARGE SCALE GENOMIC DNA]</scope>
    <source>
        <strain>K411</strain>
    </source>
</reference>
<protein>
    <recommendedName>
        <fullName evidence="1">Small ribosomal subunit protein uS19</fullName>
    </recommendedName>
    <alternativeName>
        <fullName evidence="2">30S ribosomal protein S19</fullName>
    </alternativeName>
</protein>
<gene>
    <name evidence="1" type="primary">rpsS</name>
    <name type="ordered locus">jk1829</name>
</gene>
<dbReference type="EMBL" id="CR931997">
    <property type="protein sequence ID" value="CAI38006.1"/>
    <property type="molecule type" value="Genomic_DNA"/>
</dbReference>
<dbReference type="RefSeq" id="WP_005291963.1">
    <property type="nucleotide sequence ID" value="NC_007164.1"/>
</dbReference>
<dbReference type="SMR" id="Q4JT51"/>
<dbReference type="STRING" id="306537.jk1829"/>
<dbReference type="GeneID" id="92739452"/>
<dbReference type="KEGG" id="cjk:jk1829"/>
<dbReference type="eggNOG" id="COG0185">
    <property type="taxonomic scope" value="Bacteria"/>
</dbReference>
<dbReference type="HOGENOM" id="CLU_144911_0_1_11"/>
<dbReference type="OrthoDB" id="9797833at2"/>
<dbReference type="Proteomes" id="UP000000545">
    <property type="component" value="Chromosome"/>
</dbReference>
<dbReference type="GO" id="GO:0005737">
    <property type="term" value="C:cytoplasm"/>
    <property type="evidence" value="ECO:0007669"/>
    <property type="project" value="UniProtKB-ARBA"/>
</dbReference>
<dbReference type="GO" id="GO:0015935">
    <property type="term" value="C:small ribosomal subunit"/>
    <property type="evidence" value="ECO:0007669"/>
    <property type="project" value="InterPro"/>
</dbReference>
<dbReference type="GO" id="GO:0019843">
    <property type="term" value="F:rRNA binding"/>
    <property type="evidence" value="ECO:0007669"/>
    <property type="project" value="UniProtKB-UniRule"/>
</dbReference>
<dbReference type="GO" id="GO:0003735">
    <property type="term" value="F:structural constituent of ribosome"/>
    <property type="evidence" value="ECO:0007669"/>
    <property type="project" value="InterPro"/>
</dbReference>
<dbReference type="GO" id="GO:0000028">
    <property type="term" value="P:ribosomal small subunit assembly"/>
    <property type="evidence" value="ECO:0007669"/>
    <property type="project" value="TreeGrafter"/>
</dbReference>
<dbReference type="GO" id="GO:0006412">
    <property type="term" value="P:translation"/>
    <property type="evidence" value="ECO:0007669"/>
    <property type="project" value="UniProtKB-UniRule"/>
</dbReference>
<dbReference type="FunFam" id="3.30.860.10:FF:000001">
    <property type="entry name" value="30S ribosomal protein S19"/>
    <property type="match status" value="1"/>
</dbReference>
<dbReference type="Gene3D" id="3.30.860.10">
    <property type="entry name" value="30s Ribosomal Protein S19, Chain A"/>
    <property type="match status" value="1"/>
</dbReference>
<dbReference type="HAMAP" id="MF_00531">
    <property type="entry name" value="Ribosomal_uS19"/>
    <property type="match status" value="1"/>
</dbReference>
<dbReference type="InterPro" id="IPR002222">
    <property type="entry name" value="Ribosomal_uS19"/>
</dbReference>
<dbReference type="InterPro" id="IPR005732">
    <property type="entry name" value="Ribosomal_uS19_bac-type"/>
</dbReference>
<dbReference type="InterPro" id="IPR020934">
    <property type="entry name" value="Ribosomal_uS19_CS"/>
</dbReference>
<dbReference type="InterPro" id="IPR023575">
    <property type="entry name" value="Ribosomal_uS19_SF"/>
</dbReference>
<dbReference type="NCBIfam" id="TIGR01050">
    <property type="entry name" value="rpsS_bact"/>
    <property type="match status" value="1"/>
</dbReference>
<dbReference type="PANTHER" id="PTHR11880">
    <property type="entry name" value="RIBOSOMAL PROTEIN S19P FAMILY MEMBER"/>
    <property type="match status" value="1"/>
</dbReference>
<dbReference type="PANTHER" id="PTHR11880:SF8">
    <property type="entry name" value="SMALL RIBOSOMAL SUBUNIT PROTEIN US19M"/>
    <property type="match status" value="1"/>
</dbReference>
<dbReference type="Pfam" id="PF00203">
    <property type="entry name" value="Ribosomal_S19"/>
    <property type="match status" value="1"/>
</dbReference>
<dbReference type="PIRSF" id="PIRSF002144">
    <property type="entry name" value="Ribosomal_S19"/>
    <property type="match status" value="1"/>
</dbReference>
<dbReference type="PRINTS" id="PR00975">
    <property type="entry name" value="RIBOSOMALS19"/>
</dbReference>
<dbReference type="SUPFAM" id="SSF54570">
    <property type="entry name" value="Ribosomal protein S19"/>
    <property type="match status" value="1"/>
</dbReference>
<dbReference type="PROSITE" id="PS00323">
    <property type="entry name" value="RIBOSOMAL_S19"/>
    <property type="match status" value="1"/>
</dbReference>
<keyword id="KW-1185">Reference proteome</keyword>
<keyword id="KW-0687">Ribonucleoprotein</keyword>
<keyword id="KW-0689">Ribosomal protein</keyword>
<keyword id="KW-0694">RNA-binding</keyword>
<keyword id="KW-0699">rRNA-binding</keyword>
<accession>Q4JT51</accession>
<evidence type="ECO:0000255" key="1">
    <source>
        <dbReference type="HAMAP-Rule" id="MF_00531"/>
    </source>
</evidence>
<evidence type="ECO:0000305" key="2"/>
<proteinExistence type="inferred from homology"/>
<feature type="chain" id="PRO_0000265351" description="Small ribosomal subunit protein uS19">
    <location>
        <begin position="1"/>
        <end position="92"/>
    </location>
</feature>